<organism>
    <name type="scientific">Legionella pneumophila (strain Lens)</name>
    <dbReference type="NCBI Taxonomy" id="297245"/>
    <lineage>
        <taxon>Bacteria</taxon>
        <taxon>Pseudomonadati</taxon>
        <taxon>Pseudomonadota</taxon>
        <taxon>Gammaproteobacteria</taxon>
        <taxon>Legionellales</taxon>
        <taxon>Legionellaceae</taxon>
        <taxon>Legionella</taxon>
    </lineage>
</organism>
<dbReference type="EC" id="1.1.1.37" evidence="1"/>
<dbReference type="EMBL" id="CR628337">
    <property type="protein sequence ID" value="CAH16514.1"/>
    <property type="molecule type" value="Genomic_DNA"/>
</dbReference>
<dbReference type="RefSeq" id="WP_011216244.1">
    <property type="nucleotide sequence ID" value="NC_006369.1"/>
</dbReference>
<dbReference type="SMR" id="Q5WU94"/>
<dbReference type="KEGG" id="lpf:lpl2274"/>
<dbReference type="LegioList" id="lpl2274"/>
<dbReference type="HOGENOM" id="CLU_040727_2_0_6"/>
<dbReference type="Proteomes" id="UP000002517">
    <property type="component" value="Chromosome"/>
</dbReference>
<dbReference type="GO" id="GO:0030060">
    <property type="term" value="F:L-malate dehydrogenase (NAD+) activity"/>
    <property type="evidence" value="ECO:0007669"/>
    <property type="project" value="UniProtKB-UniRule"/>
</dbReference>
<dbReference type="GO" id="GO:0006108">
    <property type="term" value="P:malate metabolic process"/>
    <property type="evidence" value="ECO:0007669"/>
    <property type="project" value="InterPro"/>
</dbReference>
<dbReference type="GO" id="GO:0006099">
    <property type="term" value="P:tricarboxylic acid cycle"/>
    <property type="evidence" value="ECO:0007669"/>
    <property type="project" value="UniProtKB-UniRule"/>
</dbReference>
<dbReference type="CDD" id="cd01338">
    <property type="entry name" value="MDH_chloroplast-like"/>
    <property type="match status" value="1"/>
</dbReference>
<dbReference type="FunFam" id="3.40.50.720:FF:000010">
    <property type="entry name" value="Malate dehydrogenase"/>
    <property type="match status" value="1"/>
</dbReference>
<dbReference type="FunFam" id="3.90.110.10:FF:000002">
    <property type="entry name" value="Malate dehydrogenase"/>
    <property type="match status" value="1"/>
</dbReference>
<dbReference type="Gene3D" id="3.90.110.10">
    <property type="entry name" value="Lactate dehydrogenase/glycoside hydrolase, family 4, C-terminal"/>
    <property type="match status" value="1"/>
</dbReference>
<dbReference type="Gene3D" id="3.40.50.720">
    <property type="entry name" value="NAD(P)-binding Rossmann-like Domain"/>
    <property type="match status" value="1"/>
</dbReference>
<dbReference type="HAMAP" id="MF_01517">
    <property type="entry name" value="Malate_dehydrog_2"/>
    <property type="match status" value="1"/>
</dbReference>
<dbReference type="InterPro" id="IPR001557">
    <property type="entry name" value="L-lactate/malate_DH"/>
</dbReference>
<dbReference type="InterPro" id="IPR022383">
    <property type="entry name" value="Lactate/malate_DH_C"/>
</dbReference>
<dbReference type="InterPro" id="IPR001236">
    <property type="entry name" value="Lactate/malate_DH_N"/>
</dbReference>
<dbReference type="InterPro" id="IPR015955">
    <property type="entry name" value="Lactate_DH/Glyco_Ohase_4_C"/>
</dbReference>
<dbReference type="InterPro" id="IPR001252">
    <property type="entry name" value="Malate_DH_AS"/>
</dbReference>
<dbReference type="InterPro" id="IPR010945">
    <property type="entry name" value="Malate_DH_type2"/>
</dbReference>
<dbReference type="InterPro" id="IPR036291">
    <property type="entry name" value="NAD(P)-bd_dom_sf"/>
</dbReference>
<dbReference type="NCBIfam" id="TIGR01759">
    <property type="entry name" value="MalateDH-SF1"/>
    <property type="match status" value="1"/>
</dbReference>
<dbReference type="NCBIfam" id="NF003916">
    <property type="entry name" value="PRK05442.1"/>
    <property type="match status" value="1"/>
</dbReference>
<dbReference type="PANTHER" id="PTHR23382">
    <property type="entry name" value="MALATE DEHYDROGENASE"/>
    <property type="match status" value="1"/>
</dbReference>
<dbReference type="Pfam" id="PF02866">
    <property type="entry name" value="Ldh_1_C"/>
    <property type="match status" value="1"/>
</dbReference>
<dbReference type="Pfam" id="PF00056">
    <property type="entry name" value="Ldh_1_N"/>
    <property type="match status" value="1"/>
</dbReference>
<dbReference type="PIRSF" id="PIRSF000102">
    <property type="entry name" value="Lac_mal_DH"/>
    <property type="match status" value="1"/>
</dbReference>
<dbReference type="SUPFAM" id="SSF56327">
    <property type="entry name" value="LDH C-terminal domain-like"/>
    <property type="match status" value="1"/>
</dbReference>
<dbReference type="SUPFAM" id="SSF51735">
    <property type="entry name" value="NAD(P)-binding Rossmann-fold domains"/>
    <property type="match status" value="1"/>
</dbReference>
<dbReference type="PROSITE" id="PS00068">
    <property type="entry name" value="MDH"/>
    <property type="match status" value="1"/>
</dbReference>
<evidence type="ECO:0000255" key="1">
    <source>
        <dbReference type="HAMAP-Rule" id="MF_01517"/>
    </source>
</evidence>
<accession>Q5WU94</accession>
<protein>
    <recommendedName>
        <fullName evidence="1">Malate dehydrogenase</fullName>
        <ecNumber evidence="1">1.1.1.37</ecNumber>
    </recommendedName>
</protein>
<keyword id="KW-0520">NAD</keyword>
<keyword id="KW-0560">Oxidoreductase</keyword>
<keyword id="KW-0816">Tricarboxylic acid cycle</keyword>
<name>MDH_LEGPL</name>
<reference key="1">
    <citation type="journal article" date="2004" name="Nat. Genet.">
        <title>Evidence in the Legionella pneumophila genome for exploitation of host cell functions and high genome plasticity.</title>
        <authorList>
            <person name="Cazalet C."/>
            <person name="Rusniok C."/>
            <person name="Brueggemann H."/>
            <person name="Zidane N."/>
            <person name="Magnier A."/>
            <person name="Ma L."/>
            <person name="Tichit M."/>
            <person name="Jarraud S."/>
            <person name="Bouchier C."/>
            <person name="Vandenesch F."/>
            <person name="Kunst F."/>
            <person name="Etienne J."/>
            <person name="Glaser P."/>
            <person name="Buchrieser C."/>
        </authorList>
    </citation>
    <scope>NUCLEOTIDE SEQUENCE [LARGE SCALE GENOMIC DNA]</scope>
    <source>
        <strain>Lens</strain>
    </source>
</reference>
<comment type="function">
    <text evidence="1">Catalyzes the reversible oxidation of malate to oxaloacetate.</text>
</comment>
<comment type="catalytic activity">
    <reaction evidence="1">
        <text>(S)-malate + NAD(+) = oxaloacetate + NADH + H(+)</text>
        <dbReference type="Rhea" id="RHEA:21432"/>
        <dbReference type="ChEBI" id="CHEBI:15378"/>
        <dbReference type="ChEBI" id="CHEBI:15589"/>
        <dbReference type="ChEBI" id="CHEBI:16452"/>
        <dbReference type="ChEBI" id="CHEBI:57540"/>
        <dbReference type="ChEBI" id="CHEBI:57945"/>
        <dbReference type="EC" id="1.1.1.37"/>
    </reaction>
</comment>
<comment type="similarity">
    <text evidence="1">Belongs to the LDH/MDH superfamily. MDH type 2 family.</text>
</comment>
<feature type="chain" id="PRO_0000113373" description="Malate dehydrogenase">
    <location>
        <begin position="1"/>
        <end position="330"/>
    </location>
</feature>
<feature type="active site" description="Proton acceptor" evidence="1">
    <location>
        <position position="188"/>
    </location>
</feature>
<feature type="binding site" evidence="1">
    <location>
        <begin position="12"/>
        <end position="18"/>
    </location>
    <ligand>
        <name>NAD(+)</name>
        <dbReference type="ChEBI" id="CHEBI:57540"/>
    </ligand>
</feature>
<feature type="binding site" evidence="1">
    <location>
        <position position="93"/>
    </location>
    <ligand>
        <name>substrate</name>
    </ligand>
</feature>
<feature type="binding site" evidence="1">
    <location>
        <position position="99"/>
    </location>
    <ligand>
        <name>substrate</name>
    </ligand>
</feature>
<feature type="binding site" evidence="1">
    <location>
        <position position="106"/>
    </location>
    <ligand>
        <name>NAD(+)</name>
        <dbReference type="ChEBI" id="CHEBI:57540"/>
    </ligand>
</feature>
<feature type="binding site" evidence="1">
    <location>
        <position position="113"/>
    </location>
    <ligand>
        <name>NAD(+)</name>
        <dbReference type="ChEBI" id="CHEBI:57540"/>
    </ligand>
</feature>
<feature type="binding site" evidence="1">
    <location>
        <begin position="130"/>
        <end position="132"/>
    </location>
    <ligand>
        <name>NAD(+)</name>
        <dbReference type="ChEBI" id="CHEBI:57540"/>
    </ligand>
</feature>
<feature type="binding site" evidence="1">
    <location>
        <position position="132"/>
    </location>
    <ligand>
        <name>substrate</name>
    </ligand>
</feature>
<feature type="binding site" evidence="1">
    <location>
        <position position="163"/>
    </location>
    <ligand>
        <name>substrate</name>
    </ligand>
</feature>
<sequence>MTNNRVRVAVTGAAGQIGYALVFRIASGQMFGPNTEVELNLLELEPALPSLEGVAMELDDCAFPLLKRIVCTADLNKAMDGVNWALLVGSVPRKQGMERSDLLQINGGIFTKQGQAINDYASDDVRVFVVGNPCNTNCLIAMNHAKDVPSDRFYAMTTLDELRARTQLAKKAGVDITAVTQMTIWGNHSATQYPDFYNAKINGTSAARVINDQTWLKETFVSTVQQRGAAVIKARGSSSAASAANAIITGVNHLVTDTPAGESFSMCRRSKGEYGVDEGLIFSFPCRREHGELKVVENMEFNDFGRERFNITLNELRSERDTVKSLGLLD</sequence>
<gene>
    <name evidence="1" type="primary">mdh</name>
    <name type="ordered locus">lpl2274</name>
</gene>
<proteinExistence type="inferred from homology"/>